<evidence type="ECO:0000255" key="1">
    <source>
        <dbReference type="HAMAP-Rule" id="MF_00382"/>
    </source>
</evidence>
<evidence type="ECO:0000305" key="2"/>
<dbReference type="EMBL" id="BA000021">
    <property type="protein sequence ID" value="BAC24230.1"/>
    <property type="molecule type" value="Genomic_DNA"/>
</dbReference>
<dbReference type="SMR" id="Q8D3B7"/>
<dbReference type="STRING" id="36870.gene:10368562"/>
<dbReference type="KEGG" id="wbr:rplT"/>
<dbReference type="eggNOG" id="COG0292">
    <property type="taxonomic scope" value="Bacteria"/>
</dbReference>
<dbReference type="HOGENOM" id="CLU_123265_0_1_6"/>
<dbReference type="OrthoDB" id="9808966at2"/>
<dbReference type="Proteomes" id="UP000000562">
    <property type="component" value="Chromosome"/>
</dbReference>
<dbReference type="GO" id="GO:1990904">
    <property type="term" value="C:ribonucleoprotein complex"/>
    <property type="evidence" value="ECO:0007669"/>
    <property type="project" value="UniProtKB-KW"/>
</dbReference>
<dbReference type="GO" id="GO:0005840">
    <property type="term" value="C:ribosome"/>
    <property type="evidence" value="ECO:0007669"/>
    <property type="project" value="UniProtKB-KW"/>
</dbReference>
<dbReference type="GO" id="GO:0019843">
    <property type="term" value="F:rRNA binding"/>
    <property type="evidence" value="ECO:0007669"/>
    <property type="project" value="UniProtKB-UniRule"/>
</dbReference>
<dbReference type="GO" id="GO:0003735">
    <property type="term" value="F:structural constituent of ribosome"/>
    <property type="evidence" value="ECO:0007669"/>
    <property type="project" value="InterPro"/>
</dbReference>
<dbReference type="GO" id="GO:0000027">
    <property type="term" value="P:ribosomal large subunit assembly"/>
    <property type="evidence" value="ECO:0007669"/>
    <property type="project" value="UniProtKB-UniRule"/>
</dbReference>
<dbReference type="GO" id="GO:0006412">
    <property type="term" value="P:translation"/>
    <property type="evidence" value="ECO:0007669"/>
    <property type="project" value="InterPro"/>
</dbReference>
<dbReference type="CDD" id="cd07026">
    <property type="entry name" value="Ribosomal_L20"/>
    <property type="match status" value="1"/>
</dbReference>
<dbReference type="FunFam" id="1.10.1900.20:FF:000001">
    <property type="entry name" value="50S ribosomal protein L20"/>
    <property type="match status" value="1"/>
</dbReference>
<dbReference type="Gene3D" id="6.10.160.10">
    <property type="match status" value="1"/>
</dbReference>
<dbReference type="Gene3D" id="1.10.1900.20">
    <property type="entry name" value="Ribosomal protein L20"/>
    <property type="match status" value="1"/>
</dbReference>
<dbReference type="HAMAP" id="MF_00382">
    <property type="entry name" value="Ribosomal_bL20"/>
    <property type="match status" value="1"/>
</dbReference>
<dbReference type="InterPro" id="IPR005813">
    <property type="entry name" value="Ribosomal_bL20"/>
</dbReference>
<dbReference type="InterPro" id="IPR049946">
    <property type="entry name" value="RIBOSOMAL_L20_CS"/>
</dbReference>
<dbReference type="InterPro" id="IPR035566">
    <property type="entry name" value="Ribosomal_protein_bL20_C"/>
</dbReference>
<dbReference type="NCBIfam" id="TIGR01032">
    <property type="entry name" value="rplT_bact"/>
    <property type="match status" value="1"/>
</dbReference>
<dbReference type="PANTHER" id="PTHR10986">
    <property type="entry name" value="39S RIBOSOMAL PROTEIN L20"/>
    <property type="match status" value="1"/>
</dbReference>
<dbReference type="Pfam" id="PF00453">
    <property type="entry name" value="Ribosomal_L20"/>
    <property type="match status" value="1"/>
</dbReference>
<dbReference type="PRINTS" id="PR00062">
    <property type="entry name" value="RIBOSOMALL20"/>
</dbReference>
<dbReference type="SUPFAM" id="SSF74731">
    <property type="entry name" value="Ribosomal protein L20"/>
    <property type="match status" value="1"/>
</dbReference>
<dbReference type="PROSITE" id="PS00937">
    <property type="entry name" value="RIBOSOMAL_L20"/>
    <property type="match status" value="1"/>
</dbReference>
<name>RL20_WIGBR</name>
<organism>
    <name type="scientific">Wigglesworthia glossinidia brevipalpis</name>
    <dbReference type="NCBI Taxonomy" id="36870"/>
    <lineage>
        <taxon>Bacteria</taxon>
        <taxon>Pseudomonadati</taxon>
        <taxon>Pseudomonadota</taxon>
        <taxon>Gammaproteobacteria</taxon>
        <taxon>Enterobacterales</taxon>
        <taxon>Erwiniaceae</taxon>
        <taxon>Wigglesworthia</taxon>
    </lineage>
</organism>
<comment type="function">
    <text evidence="1">Binds directly to 23S ribosomal RNA and is necessary for the in vitro assembly process of the 50S ribosomal subunit. It is not involved in the protein synthesizing functions of that subunit.</text>
</comment>
<comment type="similarity">
    <text evidence="1">Belongs to the bacterial ribosomal protein bL20 family.</text>
</comment>
<sequence length="117" mass="13906">MTRIKRGVSSKFRHKKILKKTKGYYGARSRSYRIAFQAFIKAGQYAYRDRKNKKRTFRKIWICRINSAVRKHGLSYSCFMYKIKKLSIFIDRKILSDLAVLNKEAFSELIKKVKSIS</sequence>
<protein>
    <recommendedName>
        <fullName evidence="1">Large ribosomal subunit protein bL20</fullName>
    </recommendedName>
    <alternativeName>
        <fullName evidence="2">50S ribosomal protein L20</fullName>
    </alternativeName>
</protein>
<reference key="1">
    <citation type="journal article" date="2002" name="Nat. Genet.">
        <title>Genome sequence of the endocellular obligate symbiont of tsetse flies, Wigglesworthia glossinidia.</title>
        <authorList>
            <person name="Akman L."/>
            <person name="Yamashita A."/>
            <person name="Watanabe H."/>
            <person name="Oshima K."/>
            <person name="Shiba T."/>
            <person name="Hattori M."/>
            <person name="Aksoy S."/>
        </authorList>
    </citation>
    <scope>NUCLEOTIDE SEQUENCE [LARGE SCALE GENOMIC DNA]</scope>
</reference>
<gene>
    <name evidence="1" type="primary">rplT</name>
    <name type="ordered locus">WIGBR0840</name>
</gene>
<proteinExistence type="inferred from homology"/>
<keyword id="KW-1185">Reference proteome</keyword>
<keyword id="KW-0687">Ribonucleoprotein</keyword>
<keyword id="KW-0689">Ribosomal protein</keyword>
<keyword id="KW-0694">RNA-binding</keyword>
<keyword id="KW-0699">rRNA-binding</keyword>
<accession>Q8D3B7</accession>
<feature type="chain" id="PRO_0000177264" description="Large ribosomal subunit protein bL20">
    <location>
        <begin position="1"/>
        <end position="117"/>
    </location>
</feature>